<reference key="1">
    <citation type="journal article" date="2009" name="ISME J.">
        <title>The genome sequence of the psychrophilic archaeon, Methanococcoides burtonii: the role of genome evolution in cold adaptation.</title>
        <authorList>
            <person name="Allen M.A."/>
            <person name="Lauro F.M."/>
            <person name="Williams T.J."/>
            <person name="Burg D."/>
            <person name="Siddiqui K.S."/>
            <person name="De Francisci D."/>
            <person name="Chong K.W."/>
            <person name="Pilak O."/>
            <person name="Chew H.H."/>
            <person name="De Maere M.Z."/>
            <person name="Ting L."/>
            <person name="Katrib M."/>
            <person name="Ng C."/>
            <person name="Sowers K.R."/>
            <person name="Galperin M.Y."/>
            <person name="Anderson I.J."/>
            <person name="Ivanova N."/>
            <person name="Dalin E."/>
            <person name="Martinez M."/>
            <person name="Lapidus A."/>
            <person name="Hauser L."/>
            <person name="Land M."/>
            <person name="Thomas T."/>
            <person name="Cavicchioli R."/>
        </authorList>
    </citation>
    <scope>NUCLEOTIDE SEQUENCE [LARGE SCALE GENOMIC DNA]</scope>
    <source>
        <strain>DSM 6242 / NBRC 107633 / OCM 468 / ACE-M</strain>
    </source>
</reference>
<dbReference type="EMBL" id="CP000300">
    <property type="protein sequence ID" value="ABE51025.1"/>
    <property type="molecule type" value="Genomic_DNA"/>
</dbReference>
<dbReference type="RefSeq" id="WP_011498189.1">
    <property type="nucleotide sequence ID" value="NC_007955.1"/>
</dbReference>
<dbReference type="SMR" id="Q12ZV1"/>
<dbReference type="STRING" id="259564.Mbur_0001"/>
<dbReference type="GeneID" id="3996831"/>
<dbReference type="KEGG" id="mbu:Mbur_0001"/>
<dbReference type="HOGENOM" id="CLU_033361_2_0_2"/>
<dbReference type="OrthoDB" id="6121at2157"/>
<dbReference type="Proteomes" id="UP000001979">
    <property type="component" value="Chromosome"/>
</dbReference>
<dbReference type="GO" id="GO:0022625">
    <property type="term" value="C:cytosolic large ribosomal subunit"/>
    <property type="evidence" value="ECO:0007669"/>
    <property type="project" value="TreeGrafter"/>
</dbReference>
<dbReference type="GO" id="GO:0019843">
    <property type="term" value="F:rRNA binding"/>
    <property type="evidence" value="ECO:0007669"/>
    <property type="project" value="UniProtKB-UniRule"/>
</dbReference>
<dbReference type="GO" id="GO:0003735">
    <property type="term" value="F:structural constituent of ribosome"/>
    <property type="evidence" value="ECO:0007669"/>
    <property type="project" value="InterPro"/>
</dbReference>
<dbReference type="GO" id="GO:0006412">
    <property type="term" value="P:translation"/>
    <property type="evidence" value="ECO:0007669"/>
    <property type="project" value="UniProtKB-UniRule"/>
</dbReference>
<dbReference type="Gene3D" id="3.30.1430.10">
    <property type="match status" value="1"/>
</dbReference>
<dbReference type="Gene3D" id="4.10.960.10">
    <property type="entry name" value="Ribosomal protein L3, domain 3"/>
    <property type="match status" value="1"/>
</dbReference>
<dbReference type="Gene3D" id="2.40.30.10">
    <property type="entry name" value="Translation factors"/>
    <property type="match status" value="1"/>
</dbReference>
<dbReference type="HAMAP" id="MF_01325_A">
    <property type="entry name" value="Ribosomal_uL3_A"/>
    <property type="match status" value="1"/>
</dbReference>
<dbReference type="InterPro" id="IPR045077">
    <property type="entry name" value="L3_arc_euk"/>
</dbReference>
<dbReference type="InterPro" id="IPR044892">
    <property type="entry name" value="Ribosomal_L3_dom_3_arc_sf"/>
</dbReference>
<dbReference type="InterPro" id="IPR000597">
    <property type="entry name" value="Ribosomal_uL3"/>
</dbReference>
<dbReference type="InterPro" id="IPR019928">
    <property type="entry name" value="Ribosomal_uL3_arc"/>
</dbReference>
<dbReference type="InterPro" id="IPR019926">
    <property type="entry name" value="Ribosomal_uL3_CS"/>
</dbReference>
<dbReference type="InterPro" id="IPR009000">
    <property type="entry name" value="Transl_B-barrel_sf"/>
</dbReference>
<dbReference type="NCBIfam" id="TIGR03626">
    <property type="entry name" value="L3_arch"/>
    <property type="match status" value="1"/>
</dbReference>
<dbReference type="NCBIfam" id="NF003261">
    <property type="entry name" value="PRK04231.1"/>
    <property type="match status" value="1"/>
</dbReference>
<dbReference type="PANTHER" id="PTHR11363">
    <property type="entry name" value="60S RIBOSOMAL PROTEIN L3-RELATED"/>
    <property type="match status" value="1"/>
</dbReference>
<dbReference type="PANTHER" id="PTHR11363:SF5">
    <property type="entry name" value="LARGE RIBOSOMAL SUBUNIT PROTEIN UL3"/>
    <property type="match status" value="1"/>
</dbReference>
<dbReference type="Pfam" id="PF00297">
    <property type="entry name" value="Ribosomal_L3"/>
    <property type="match status" value="1"/>
</dbReference>
<dbReference type="SUPFAM" id="SSF50447">
    <property type="entry name" value="Translation proteins"/>
    <property type="match status" value="1"/>
</dbReference>
<dbReference type="PROSITE" id="PS00474">
    <property type="entry name" value="RIBOSOMAL_L3"/>
    <property type="match status" value="1"/>
</dbReference>
<organism>
    <name type="scientific">Methanococcoides burtonii (strain DSM 6242 / NBRC 107633 / OCM 468 / ACE-M)</name>
    <dbReference type="NCBI Taxonomy" id="259564"/>
    <lineage>
        <taxon>Archaea</taxon>
        <taxon>Methanobacteriati</taxon>
        <taxon>Methanobacteriota</taxon>
        <taxon>Stenosarchaea group</taxon>
        <taxon>Methanomicrobia</taxon>
        <taxon>Methanosarcinales</taxon>
        <taxon>Methanosarcinaceae</taxon>
        <taxon>Methanococcoides</taxon>
    </lineage>
</organism>
<comment type="function">
    <text evidence="1">One of the primary rRNA binding proteins, it binds directly near the 3'-end of the 23S rRNA, where it nucleates assembly of the 50S subunit.</text>
</comment>
<comment type="subunit">
    <text evidence="1">Part of the 50S ribosomal subunit. Forms a cluster with proteins L14 and L24e.</text>
</comment>
<comment type="similarity">
    <text evidence="1">Belongs to the universal ribosomal protein uL3 family.</text>
</comment>
<proteinExistence type="inferred from homology"/>
<accession>Q12ZV1</accession>
<feature type="chain" id="PRO_1000052078" description="Large ribosomal subunit protein uL3">
    <location>
        <begin position="1"/>
        <end position="337"/>
    </location>
</feature>
<feature type="region of interest" description="Disordered" evidence="2">
    <location>
        <begin position="1"/>
        <end position="32"/>
    </location>
</feature>
<name>RL3_METBU</name>
<protein>
    <recommendedName>
        <fullName evidence="1">Large ribosomal subunit protein uL3</fullName>
    </recommendedName>
    <alternativeName>
        <fullName evidence="3">50S ribosomal protein L3</fullName>
    </alternativeName>
</protein>
<gene>
    <name evidence="1" type="primary">rpl3</name>
    <name type="ordered locus">Mbur_0001</name>
</gene>
<sequence length="337" mass="37077">MAKGHRPRRGSLAYSPRKRSQSHIPRFRSWPESDAEPKLQGFAGYKVGMTHVIMIDDVKHSLTEGTEISVPVTIIETPAIRVAAIRAYGKDTYGEIAIAEAWTDVLDKDLSRRLKTAKNPDVNASLEKLETLVESGRANDIRLITYTLPSTLTGVPKKVPDVMETGVSGSDVKAKFEYAKTVLGTMVEISDVFDNGKIVDVAAITTGHGTQGPVKRWGINLMKNKHSRQGSLRQVGTLGPWTPAHVSWRVPQAGQMGYHQRTDYNKRILKMSSDVDEVNPAGGFVNYGLVRGNYILIKGSVPGPSKRLIRLREPTRSKVSSIGEPQIMHVSTQTLQG</sequence>
<keyword id="KW-0687">Ribonucleoprotein</keyword>
<keyword id="KW-0689">Ribosomal protein</keyword>
<keyword id="KW-0694">RNA-binding</keyword>
<keyword id="KW-0699">rRNA-binding</keyword>
<evidence type="ECO:0000255" key="1">
    <source>
        <dbReference type="HAMAP-Rule" id="MF_01325"/>
    </source>
</evidence>
<evidence type="ECO:0000256" key="2">
    <source>
        <dbReference type="SAM" id="MobiDB-lite"/>
    </source>
</evidence>
<evidence type="ECO:0000305" key="3"/>